<dbReference type="EMBL" id="CP000142">
    <property type="protein sequence ID" value="ABA88666.1"/>
    <property type="molecule type" value="Genomic_DNA"/>
</dbReference>
<dbReference type="RefSeq" id="WP_011341149.1">
    <property type="nucleotide sequence ID" value="NC_007498.2"/>
</dbReference>
<dbReference type="SMR" id="Q3A4P1"/>
<dbReference type="STRING" id="338963.Pcar_1420"/>
<dbReference type="KEGG" id="pca:Pcar_1420"/>
<dbReference type="eggNOG" id="COG0291">
    <property type="taxonomic scope" value="Bacteria"/>
</dbReference>
<dbReference type="HOGENOM" id="CLU_169643_3_0_7"/>
<dbReference type="OrthoDB" id="9804851at2"/>
<dbReference type="Proteomes" id="UP000002534">
    <property type="component" value="Chromosome"/>
</dbReference>
<dbReference type="GO" id="GO:0022625">
    <property type="term" value="C:cytosolic large ribosomal subunit"/>
    <property type="evidence" value="ECO:0007669"/>
    <property type="project" value="TreeGrafter"/>
</dbReference>
<dbReference type="GO" id="GO:0003735">
    <property type="term" value="F:structural constituent of ribosome"/>
    <property type="evidence" value="ECO:0007669"/>
    <property type="project" value="InterPro"/>
</dbReference>
<dbReference type="GO" id="GO:0006412">
    <property type="term" value="P:translation"/>
    <property type="evidence" value="ECO:0007669"/>
    <property type="project" value="UniProtKB-UniRule"/>
</dbReference>
<dbReference type="FunFam" id="4.10.410.60:FF:000001">
    <property type="entry name" value="50S ribosomal protein L35"/>
    <property type="match status" value="1"/>
</dbReference>
<dbReference type="Gene3D" id="4.10.410.60">
    <property type="match status" value="1"/>
</dbReference>
<dbReference type="HAMAP" id="MF_00514">
    <property type="entry name" value="Ribosomal_bL35"/>
    <property type="match status" value="1"/>
</dbReference>
<dbReference type="InterPro" id="IPR001706">
    <property type="entry name" value="Ribosomal_bL35"/>
</dbReference>
<dbReference type="InterPro" id="IPR021137">
    <property type="entry name" value="Ribosomal_bL35-like"/>
</dbReference>
<dbReference type="InterPro" id="IPR018265">
    <property type="entry name" value="Ribosomal_bL35_CS"/>
</dbReference>
<dbReference type="InterPro" id="IPR037229">
    <property type="entry name" value="Ribosomal_bL35_sf"/>
</dbReference>
<dbReference type="NCBIfam" id="TIGR00001">
    <property type="entry name" value="rpmI_bact"/>
    <property type="match status" value="1"/>
</dbReference>
<dbReference type="PANTHER" id="PTHR33343">
    <property type="entry name" value="54S RIBOSOMAL PROTEIN BL35M"/>
    <property type="match status" value="1"/>
</dbReference>
<dbReference type="PANTHER" id="PTHR33343:SF1">
    <property type="entry name" value="LARGE RIBOSOMAL SUBUNIT PROTEIN BL35M"/>
    <property type="match status" value="1"/>
</dbReference>
<dbReference type="Pfam" id="PF01632">
    <property type="entry name" value="Ribosomal_L35p"/>
    <property type="match status" value="1"/>
</dbReference>
<dbReference type="PRINTS" id="PR00064">
    <property type="entry name" value="RIBOSOMALL35"/>
</dbReference>
<dbReference type="SUPFAM" id="SSF143034">
    <property type="entry name" value="L35p-like"/>
    <property type="match status" value="1"/>
</dbReference>
<dbReference type="PROSITE" id="PS00936">
    <property type="entry name" value="RIBOSOMAL_L35"/>
    <property type="match status" value="1"/>
</dbReference>
<accession>Q3A4P1</accession>
<sequence>MPKIKTNRGAAKRFRKTGSGKIRRNKAFTSHILTKKSTKRKRELRQGTLVAKADQKNISRLIPYI</sequence>
<evidence type="ECO:0000255" key="1">
    <source>
        <dbReference type="HAMAP-Rule" id="MF_00514"/>
    </source>
</evidence>
<evidence type="ECO:0000256" key="2">
    <source>
        <dbReference type="SAM" id="MobiDB-lite"/>
    </source>
</evidence>
<evidence type="ECO:0000305" key="3"/>
<protein>
    <recommendedName>
        <fullName evidence="1">Large ribosomal subunit protein bL35</fullName>
    </recommendedName>
    <alternativeName>
        <fullName evidence="3">50S ribosomal protein L35</fullName>
    </alternativeName>
</protein>
<comment type="similarity">
    <text evidence="1">Belongs to the bacterial ribosomal protein bL35 family.</text>
</comment>
<proteinExistence type="inferred from homology"/>
<feature type="chain" id="PRO_0000258720" description="Large ribosomal subunit protein bL35">
    <location>
        <begin position="1"/>
        <end position="65"/>
    </location>
</feature>
<feature type="region of interest" description="Disordered" evidence="2">
    <location>
        <begin position="1"/>
        <end position="28"/>
    </location>
</feature>
<feature type="compositionally biased region" description="Basic residues" evidence="2">
    <location>
        <begin position="10"/>
        <end position="26"/>
    </location>
</feature>
<organism>
    <name type="scientific">Syntrophotalea carbinolica (strain DSM 2380 / NBRC 103641 / GraBd1)</name>
    <name type="common">Pelobacter carbinolicus</name>
    <dbReference type="NCBI Taxonomy" id="338963"/>
    <lineage>
        <taxon>Bacteria</taxon>
        <taxon>Pseudomonadati</taxon>
        <taxon>Thermodesulfobacteriota</taxon>
        <taxon>Desulfuromonadia</taxon>
        <taxon>Desulfuromonadales</taxon>
        <taxon>Syntrophotaleaceae</taxon>
        <taxon>Syntrophotalea</taxon>
    </lineage>
</organism>
<name>RL35_SYNC1</name>
<gene>
    <name evidence="1" type="primary">rpmI</name>
    <name type="ordered locus">Pcar_1420</name>
</gene>
<keyword id="KW-1185">Reference proteome</keyword>
<keyword id="KW-0687">Ribonucleoprotein</keyword>
<keyword id="KW-0689">Ribosomal protein</keyword>
<reference key="1">
    <citation type="submission" date="2005-10" db="EMBL/GenBank/DDBJ databases">
        <title>Complete sequence of Pelobacter carbinolicus DSM 2380.</title>
        <authorList>
            <person name="Copeland A."/>
            <person name="Lucas S."/>
            <person name="Lapidus A."/>
            <person name="Barry K."/>
            <person name="Detter J.C."/>
            <person name="Glavina T."/>
            <person name="Hammon N."/>
            <person name="Israni S."/>
            <person name="Pitluck S."/>
            <person name="Chertkov O."/>
            <person name="Schmutz J."/>
            <person name="Larimer F."/>
            <person name="Land M."/>
            <person name="Kyrpides N."/>
            <person name="Ivanova N."/>
            <person name="Richardson P."/>
        </authorList>
    </citation>
    <scope>NUCLEOTIDE SEQUENCE [LARGE SCALE GENOMIC DNA]</scope>
    <source>
        <strain>DSM 2380 / NBRC 103641 / GraBd1</strain>
    </source>
</reference>